<reference key="1">
    <citation type="journal article" date="2005" name="Nature">
        <title>Genomic sequence of the pathogenic and allergenic filamentous fungus Aspergillus fumigatus.</title>
        <authorList>
            <person name="Nierman W.C."/>
            <person name="Pain A."/>
            <person name="Anderson M.J."/>
            <person name="Wortman J.R."/>
            <person name="Kim H.S."/>
            <person name="Arroyo J."/>
            <person name="Berriman M."/>
            <person name="Abe K."/>
            <person name="Archer D.B."/>
            <person name="Bermejo C."/>
            <person name="Bennett J.W."/>
            <person name="Bowyer P."/>
            <person name="Chen D."/>
            <person name="Collins M."/>
            <person name="Coulsen R."/>
            <person name="Davies R."/>
            <person name="Dyer P.S."/>
            <person name="Farman M.L."/>
            <person name="Fedorova N."/>
            <person name="Fedorova N.D."/>
            <person name="Feldblyum T.V."/>
            <person name="Fischer R."/>
            <person name="Fosker N."/>
            <person name="Fraser A."/>
            <person name="Garcia J.L."/>
            <person name="Garcia M.J."/>
            <person name="Goble A."/>
            <person name="Goldman G.H."/>
            <person name="Gomi K."/>
            <person name="Griffith-Jones S."/>
            <person name="Gwilliam R."/>
            <person name="Haas B.J."/>
            <person name="Haas H."/>
            <person name="Harris D.E."/>
            <person name="Horiuchi H."/>
            <person name="Huang J."/>
            <person name="Humphray S."/>
            <person name="Jimenez J."/>
            <person name="Keller N."/>
            <person name="Khouri H."/>
            <person name="Kitamoto K."/>
            <person name="Kobayashi T."/>
            <person name="Konzack S."/>
            <person name="Kulkarni R."/>
            <person name="Kumagai T."/>
            <person name="Lafton A."/>
            <person name="Latge J.-P."/>
            <person name="Li W."/>
            <person name="Lord A."/>
            <person name="Lu C."/>
            <person name="Majoros W.H."/>
            <person name="May G.S."/>
            <person name="Miller B.L."/>
            <person name="Mohamoud Y."/>
            <person name="Molina M."/>
            <person name="Monod M."/>
            <person name="Mouyna I."/>
            <person name="Mulligan S."/>
            <person name="Murphy L.D."/>
            <person name="O'Neil S."/>
            <person name="Paulsen I."/>
            <person name="Penalva M.A."/>
            <person name="Pertea M."/>
            <person name="Price C."/>
            <person name="Pritchard B.L."/>
            <person name="Quail M.A."/>
            <person name="Rabbinowitsch E."/>
            <person name="Rawlins N."/>
            <person name="Rajandream M.A."/>
            <person name="Reichard U."/>
            <person name="Renauld H."/>
            <person name="Robson G.D."/>
            <person name="Rodriguez de Cordoba S."/>
            <person name="Rodriguez-Pena J.M."/>
            <person name="Ronning C.M."/>
            <person name="Rutter S."/>
            <person name="Salzberg S.L."/>
            <person name="Sanchez M."/>
            <person name="Sanchez-Ferrero J.C."/>
            <person name="Saunders D."/>
            <person name="Seeger K."/>
            <person name="Squares R."/>
            <person name="Squares S."/>
            <person name="Takeuchi M."/>
            <person name="Tekaia F."/>
            <person name="Turner G."/>
            <person name="Vazquez de Aldana C.R."/>
            <person name="Weidman J."/>
            <person name="White O."/>
            <person name="Woodward J.R."/>
            <person name="Yu J.-H."/>
            <person name="Fraser C.M."/>
            <person name="Galagan J.E."/>
            <person name="Asai K."/>
            <person name="Machida M."/>
            <person name="Hall N."/>
            <person name="Barrell B.G."/>
            <person name="Denning D.W."/>
        </authorList>
    </citation>
    <scope>NUCLEOTIDE SEQUENCE [LARGE SCALE GENOMIC DNA]</scope>
    <source>
        <strain>ATCC MYA-4609 / CBS 101355 / FGSC A1100 / Af293</strain>
    </source>
</reference>
<name>CIAO1_ASPFU</name>
<dbReference type="EMBL" id="AAHF01000004">
    <property type="protein sequence ID" value="EAL90222.1"/>
    <property type="molecule type" value="Genomic_DNA"/>
</dbReference>
<dbReference type="RefSeq" id="XP_752260.1">
    <property type="nucleotide sequence ID" value="XM_747167.1"/>
</dbReference>
<dbReference type="SMR" id="Q4WTL0"/>
<dbReference type="FunCoup" id="Q4WTL0">
    <property type="interactions" value="73"/>
</dbReference>
<dbReference type="STRING" id="330879.Q4WTL0"/>
<dbReference type="EnsemblFungi" id="EAL90222">
    <property type="protein sequence ID" value="EAL90222"/>
    <property type="gene ID" value="AFUA_1G08930"/>
</dbReference>
<dbReference type="GeneID" id="3510478"/>
<dbReference type="KEGG" id="afm:AFUA_1G08930"/>
<dbReference type="VEuPathDB" id="FungiDB:Afu1g08930"/>
<dbReference type="eggNOG" id="KOG0645">
    <property type="taxonomic scope" value="Eukaryota"/>
</dbReference>
<dbReference type="HOGENOM" id="CLU_000288_57_8_1"/>
<dbReference type="InParanoid" id="Q4WTL0"/>
<dbReference type="OMA" id="IREIRWS"/>
<dbReference type="OrthoDB" id="284782at2759"/>
<dbReference type="Proteomes" id="UP000002530">
    <property type="component" value="Chromosome 1"/>
</dbReference>
<dbReference type="GO" id="GO:0097361">
    <property type="term" value="C:cytosolic [4Fe-4S] assembly targeting complex"/>
    <property type="evidence" value="ECO:0000318"/>
    <property type="project" value="GO_Central"/>
</dbReference>
<dbReference type="GO" id="GO:0016226">
    <property type="term" value="P:iron-sulfur cluster assembly"/>
    <property type="evidence" value="ECO:0000318"/>
    <property type="project" value="GO_Central"/>
</dbReference>
<dbReference type="Gene3D" id="2.130.10.10">
    <property type="entry name" value="YVTN repeat-like/Quinoprotein amine dehydrogenase"/>
    <property type="match status" value="1"/>
</dbReference>
<dbReference type="HAMAP" id="MF_03037">
    <property type="entry name" value="ciao1"/>
    <property type="match status" value="1"/>
</dbReference>
<dbReference type="InterPro" id="IPR028608">
    <property type="entry name" value="CIAO1/Cia1"/>
</dbReference>
<dbReference type="InterPro" id="IPR020472">
    <property type="entry name" value="G-protein_beta_WD-40_rep"/>
</dbReference>
<dbReference type="InterPro" id="IPR015943">
    <property type="entry name" value="WD40/YVTN_repeat-like_dom_sf"/>
</dbReference>
<dbReference type="InterPro" id="IPR036322">
    <property type="entry name" value="WD40_repeat_dom_sf"/>
</dbReference>
<dbReference type="InterPro" id="IPR001680">
    <property type="entry name" value="WD40_rpt"/>
</dbReference>
<dbReference type="PANTHER" id="PTHR19920:SF0">
    <property type="entry name" value="CYTOSOLIC IRON-SULFUR PROTEIN ASSEMBLY PROTEIN CIAO1-RELATED"/>
    <property type="match status" value="1"/>
</dbReference>
<dbReference type="PANTHER" id="PTHR19920">
    <property type="entry name" value="WD40 PROTEIN CIAO1"/>
    <property type="match status" value="1"/>
</dbReference>
<dbReference type="Pfam" id="PF00400">
    <property type="entry name" value="WD40"/>
    <property type="match status" value="6"/>
</dbReference>
<dbReference type="PRINTS" id="PR00320">
    <property type="entry name" value="GPROTEINBRPT"/>
</dbReference>
<dbReference type="SMART" id="SM00320">
    <property type="entry name" value="WD40"/>
    <property type="match status" value="7"/>
</dbReference>
<dbReference type="SUPFAM" id="SSF50978">
    <property type="entry name" value="WD40 repeat-like"/>
    <property type="match status" value="1"/>
</dbReference>
<dbReference type="PROSITE" id="PS50082">
    <property type="entry name" value="WD_REPEATS_2"/>
    <property type="match status" value="4"/>
</dbReference>
<dbReference type="PROSITE" id="PS50294">
    <property type="entry name" value="WD_REPEATS_REGION"/>
    <property type="match status" value="2"/>
</dbReference>
<proteinExistence type="inferred from homology"/>
<accession>Q4WTL0</accession>
<protein>
    <recommendedName>
        <fullName evidence="1">Probable cytosolic iron-sulfur protein assembly protein 1</fullName>
    </recommendedName>
</protein>
<gene>
    <name type="primary">cia1</name>
    <name type="ORF">AFUA_1G08930</name>
</gene>
<comment type="function">
    <text evidence="1">Essential component of the cytosolic iron-sulfur (Fe/S) protein assembly machinery. Required for the maturation of extramitochondrial Fe/S proteins.</text>
</comment>
<comment type="similarity">
    <text evidence="1">Belongs to the WD repeat CIA1 family.</text>
</comment>
<feature type="chain" id="PRO_0000382503" description="Probable cytosolic iron-sulfur protein assembly protein 1">
    <location>
        <begin position="1"/>
        <end position="460"/>
    </location>
</feature>
<feature type="repeat" description="WD 1">
    <location>
        <begin position="17"/>
        <end position="59"/>
    </location>
</feature>
<feature type="repeat" description="WD 2">
    <location>
        <begin position="63"/>
        <end position="105"/>
    </location>
</feature>
<feature type="repeat" description="WD 3">
    <location>
        <begin position="151"/>
        <end position="190"/>
    </location>
</feature>
<feature type="repeat" description="WD 4">
    <location>
        <begin position="198"/>
        <end position="237"/>
    </location>
</feature>
<feature type="repeat" description="WD 5">
    <location>
        <begin position="242"/>
        <end position="308"/>
    </location>
</feature>
<feature type="repeat" description="WD 6">
    <location>
        <begin position="342"/>
        <end position="381"/>
    </location>
</feature>
<feature type="repeat" description="WD 7">
    <location>
        <begin position="416"/>
        <end position="457"/>
    </location>
</feature>
<feature type="region of interest" description="Disordered" evidence="2">
    <location>
        <begin position="301"/>
        <end position="325"/>
    </location>
</feature>
<feature type="compositionally biased region" description="Low complexity" evidence="2">
    <location>
        <begin position="312"/>
        <end position="324"/>
    </location>
</feature>
<sequence>MVMAAEASSQLSLLSDLTPPSLERTWLTAPHPTLPIVATCSSDKTVRVYSLTNFRLLSTISGGHKRSVRTCAWKPHVKGESVLATGSFDATVGIWRRWDSYGQTERGIEDWRHADSHDHVDGMGAAGINNGGGDSADEDDEEWRFAVLLDGHDSEVKSVSWSPSGMLLATCSRDKSIWIWEDLDDGDNNFETVAVMQEHQGDVKCVAWHPVEECLASASYDDTIRLWREDLDDWGQVACIKGHQGTVWCVDWEGAENVPSAPTDLADDDPVTAQWKKAHALSGPRLVSCSDDRTVRIWRRQPKEQHQHQAQPSPSGGSGIPSIIRPTGSDEFWDEECVLPQAHDLSIYTVAWSKRTGLIASVGADGRVVVYEERFIVGSTAEAMETDHPTSADGTAADSPAALRTEWRVIATVDGAHGIYEINHVTWAKRADRGRIEGTDEEVLITTADDGTVRVWTLKM</sequence>
<organism>
    <name type="scientific">Aspergillus fumigatus (strain ATCC MYA-4609 / CBS 101355 / FGSC A1100 / Af293)</name>
    <name type="common">Neosartorya fumigata</name>
    <dbReference type="NCBI Taxonomy" id="330879"/>
    <lineage>
        <taxon>Eukaryota</taxon>
        <taxon>Fungi</taxon>
        <taxon>Dikarya</taxon>
        <taxon>Ascomycota</taxon>
        <taxon>Pezizomycotina</taxon>
        <taxon>Eurotiomycetes</taxon>
        <taxon>Eurotiomycetidae</taxon>
        <taxon>Eurotiales</taxon>
        <taxon>Aspergillaceae</taxon>
        <taxon>Aspergillus</taxon>
        <taxon>Aspergillus subgen. Fumigati</taxon>
    </lineage>
</organism>
<keyword id="KW-1185">Reference proteome</keyword>
<keyword id="KW-0677">Repeat</keyword>
<keyword id="KW-0853">WD repeat</keyword>
<evidence type="ECO:0000255" key="1">
    <source>
        <dbReference type="HAMAP-Rule" id="MF_03037"/>
    </source>
</evidence>
<evidence type="ECO:0000256" key="2">
    <source>
        <dbReference type="SAM" id="MobiDB-lite"/>
    </source>
</evidence>